<feature type="signal peptide" evidence="1">
    <location>
        <begin position="1"/>
        <end position="36"/>
    </location>
</feature>
<feature type="propeptide" id="PRO_0000026565" evidence="1">
    <location>
        <begin position="37"/>
        <end position="219"/>
    </location>
</feature>
<feature type="chain" id="PRO_0000026566" description="Staphopain B">
    <location>
        <begin position="220"/>
        <end position="393"/>
    </location>
</feature>
<feature type="active site" evidence="3">
    <location>
        <position position="243"/>
    </location>
</feature>
<feature type="active site" evidence="3">
    <location>
        <position position="340"/>
    </location>
</feature>
<feature type="active site" evidence="3">
    <location>
        <position position="360"/>
    </location>
</feature>
<feature type="site" description="Cleavage; by SspA" evidence="1">
    <location>
        <begin position="219"/>
        <end position="220"/>
    </location>
</feature>
<sequence>MNSSYKSRVFNIISIIMVSMLILSLGAFANNNKAKADSHSKQLEINVKSDKVPQKVKDLAQQQFAGYAKALDKQSNAKTGKYELGEAFKIYKFNGEEDNSYYYPVIKDGKIVYTLTLSPKNKDDLNKSKEDMNYSVKISNFIAKDLDQIKDKNSNITVLTDEKGFYFEEDGKVRLVKATPLPGNVKEKESAKTVSAKLKQELKNTVTPTKVEENEAIQEDQVQYENTLKNFKIREQQFDNSWCAGFSMAALLNATKNTDTYNAHDIMRTLYPEVSEQDLPNCSTFPNQMIEYGKSQGRDIHYQEGVPSYEQVDQLTKDNVGIMILAQSVSQNPNDPHLGHALAVVGNAKINDQEKLIYWNPWDTELSIQDADSSLLHLSFNRDYNWYGSMIGY</sequence>
<protein>
    <recommendedName>
        <fullName>Staphopain B</fullName>
        <ecNumber>3.4.22.-</ecNumber>
    </recommendedName>
    <alternativeName>
        <fullName>Staphylococcal cysteine proteinase B</fullName>
    </alternativeName>
    <alternativeName>
        <fullName>Staphylopain B</fullName>
    </alternativeName>
</protein>
<proteinExistence type="inferred from homology"/>
<comment type="function">
    <text evidence="2">Cysteine protease that plays an important role in the inhibition of host innate immune response. Degrades host elastin, fibrogen, fibronectin and kininogen. Blocks phagocytosis of opsonised S.aureus by neutrophils and monocytes by inducing their death in a proteolytic activity-dependent manner. Decreases surface expression of the 'don't eat me' signal CD31 on neutrophils. Cleaves host galectin-3/LGALS3, thereby inhibiting the neutrophil-activating ability of the lectin.</text>
</comment>
<comment type="activity regulation">
    <text evidence="1">Prematurely activated/folded staphopain B is inhibited by staphostatin B (SspC), which is probably required to protect staphylococcal cytoplasmic proteins from degradation by SspB.</text>
</comment>
<comment type="subunit">
    <text evidence="1">In the cytoplasm, prematurely activated/folded SspB forms a stable non-covalent complex with SspC.</text>
</comment>
<comment type="subcellular location">
    <subcellularLocation>
        <location evidence="1">Secreted</location>
    </subcellularLocation>
</comment>
<comment type="PTM">
    <text evidence="1">Proteolytically cleaved by staphylococcal serine protease (SspA).</text>
</comment>
<comment type="miscellaneous">
    <text evidence="1">The cascade of activation of extracellular proteases proceeds from the metalloprotease aureolysin (aur), through SspA to SspB.</text>
</comment>
<comment type="similarity">
    <text evidence="4">Belongs to the peptidase C47 family.</text>
</comment>
<organism>
    <name type="scientific">Staphylococcus aureus (strain N315)</name>
    <dbReference type="NCBI Taxonomy" id="158879"/>
    <lineage>
        <taxon>Bacteria</taxon>
        <taxon>Bacillati</taxon>
        <taxon>Bacillota</taxon>
        <taxon>Bacilli</taxon>
        <taxon>Bacillales</taxon>
        <taxon>Staphylococcaceae</taxon>
        <taxon>Staphylococcus</taxon>
    </lineage>
</organism>
<reference key="1">
    <citation type="journal article" date="2001" name="Lancet">
        <title>Whole genome sequencing of meticillin-resistant Staphylococcus aureus.</title>
        <authorList>
            <person name="Kuroda M."/>
            <person name="Ohta T."/>
            <person name="Uchiyama I."/>
            <person name="Baba T."/>
            <person name="Yuzawa H."/>
            <person name="Kobayashi I."/>
            <person name="Cui L."/>
            <person name="Oguchi A."/>
            <person name="Aoki K."/>
            <person name="Nagai Y."/>
            <person name="Lian J.-Q."/>
            <person name="Ito T."/>
            <person name="Kanamori M."/>
            <person name="Matsumaru H."/>
            <person name="Maruyama A."/>
            <person name="Murakami H."/>
            <person name="Hosoyama A."/>
            <person name="Mizutani-Ui Y."/>
            <person name="Takahashi N.K."/>
            <person name="Sawano T."/>
            <person name="Inoue R."/>
            <person name="Kaito C."/>
            <person name="Sekimizu K."/>
            <person name="Hirakawa H."/>
            <person name="Kuhara S."/>
            <person name="Goto S."/>
            <person name="Yabuzaki J."/>
            <person name="Kanehisa M."/>
            <person name="Yamashita A."/>
            <person name="Oshima K."/>
            <person name="Furuya K."/>
            <person name="Yoshino C."/>
            <person name="Shiba T."/>
            <person name="Hattori M."/>
            <person name="Ogasawara N."/>
            <person name="Hayashi H."/>
            <person name="Hiramatsu K."/>
        </authorList>
    </citation>
    <scope>NUCLEOTIDE SEQUENCE [LARGE SCALE GENOMIC DNA]</scope>
    <source>
        <strain>N315</strain>
    </source>
</reference>
<gene>
    <name type="primary">sspB</name>
    <name type="ordered locus">SA0900</name>
</gene>
<name>SSPB_STAAN</name>
<dbReference type="EC" id="3.4.22.-"/>
<dbReference type="EMBL" id="BA000018">
    <property type="protein sequence ID" value="BAB42145.1"/>
    <property type="molecule type" value="Genomic_DNA"/>
</dbReference>
<dbReference type="PIR" id="F89873">
    <property type="entry name" value="F89873"/>
</dbReference>
<dbReference type="RefSeq" id="WP_001089094.1">
    <property type="nucleotide sequence ID" value="NC_002745.2"/>
</dbReference>
<dbReference type="SMR" id="Q7A6A7"/>
<dbReference type="MEROPS" id="C47.002"/>
<dbReference type="EnsemblBacteria" id="BAB42145">
    <property type="protein sequence ID" value="BAB42145"/>
    <property type="gene ID" value="BAB42145"/>
</dbReference>
<dbReference type="KEGG" id="sau:SA0900"/>
<dbReference type="HOGENOM" id="CLU_069043_0_0_9"/>
<dbReference type="PRO" id="PR:Q7A6A7"/>
<dbReference type="GO" id="GO:0005576">
    <property type="term" value="C:extracellular region"/>
    <property type="evidence" value="ECO:0007669"/>
    <property type="project" value="UniProtKB-SubCell"/>
</dbReference>
<dbReference type="GO" id="GO:0008234">
    <property type="term" value="F:cysteine-type peptidase activity"/>
    <property type="evidence" value="ECO:0007669"/>
    <property type="project" value="UniProtKB-KW"/>
</dbReference>
<dbReference type="GO" id="GO:0006508">
    <property type="term" value="P:proteolysis"/>
    <property type="evidence" value="ECO:0007669"/>
    <property type="project" value="UniProtKB-KW"/>
</dbReference>
<dbReference type="Gene3D" id="3.90.70.10">
    <property type="entry name" value="Cysteine proteinases"/>
    <property type="match status" value="1"/>
</dbReference>
<dbReference type="Gene3D" id="3.10.500.10">
    <property type="entry name" value="Staphopain proregion domain"/>
    <property type="match status" value="1"/>
</dbReference>
<dbReference type="InterPro" id="IPR046350">
    <property type="entry name" value="Cystatin_sf"/>
</dbReference>
<dbReference type="InterPro" id="IPR038765">
    <property type="entry name" value="Papain-like_cys_pep_sf"/>
</dbReference>
<dbReference type="InterPro" id="IPR025660">
    <property type="entry name" value="Pept_his_AS"/>
</dbReference>
<dbReference type="InterPro" id="IPR008750">
    <property type="entry name" value="Peptidase_C47"/>
</dbReference>
<dbReference type="InterPro" id="IPR028076">
    <property type="entry name" value="Staphopain_pro"/>
</dbReference>
<dbReference type="InterPro" id="IPR037155">
    <property type="entry name" value="Staphopain_pro_sf"/>
</dbReference>
<dbReference type="Pfam" id="PF05543">
    <property type="entry name" value="Peptidase_C47"/>
    <property type="match status" value="1"/>
</dbReference>
<dbReference type="Pfam" id="PF14731">
    <property type="entry name" value="Staphopain_pro"/>
    <property type="match status" value="1"/>
</dbReference>
<dbReference type="SUPFAM" id="SSF54403">
    <property type="entry name" value="Cystatin/monellin"/>
    <property type="match status" value="1"/>
</dbReference>
<dbReference type="SUPFAM" id="SSF54001">
    <property type="entry name" value="Cysteine proteinases"/>
    <property type="match status" value="1"/>
</dbReference>
<dbReference type="PROSITE" id="PS00639">
    <property type="entry name" value="THIOL_PROTEASE_HIS"/>
    <property type="match status" value="1"/>
</dbReference>
<accession>Q7A6A7</accession>
<keyword id="KW-0378">Hydrolase</keyword>
<keyword id="KW-0645">Protease</keyword>
<keyword id="KW-0964">Secreted</keyword>
<keyword id="KW-0732">Signal</keyword>
<keyword id="KW-0788">Thiol protease</keyword>
<keyword id="KW-0843">Virulence</keyword>
<keyword id="KW-0865">Zymogen</keyword>
<evidence type="ECO:0000250" key="1"/>
<evidence type="ECO:0000250" key="2">
    <source>
        <dbReference type="UniProtKB" id="P0C1S6"/>
    </source>
</evidence>
<evidence type="ECO:0000255" key="3">
    <source>
        <dbReference type="PROSITE-ProRule" id="PRU10089"/>
    </source>
</evidence>
<evidence type="ECO:0000305" key="4"/>